<feature type="initiator methionine" description="Removed" evidence="1">
    <location>
        <position position="1"/>
    </location>
</feature>
<feature type="chain" id="PRO_0000211997" description="Arginine kinase">
    <location>
        <begin position="2"/>
        <end position="357"/>
    </location>
</feature>
<feature type="domain" description="Phosphagen kinase N-terminal" evidence="3">
    <location>
        <begin position="9"/>
        <end position="91"/>
    </location>
</feature>
<feature type="domain" description="Phosphagen kinase C-terminal" evidence="4">
    <location>
        <begin position="119"/>
        <end position="356"/>
    </location>
</feature>
<feature type="binding site" evidence="2">
    <location>
        <begin position="64"/>
        <end position="68"/>
    </location>
    <ligand>
        <name>L-arginine</name>
        <dbReference type="ChEBI" id="CHEBI:32682"/>
    </ligand>
</feature>
<feature type="binding site" evidence="4">
    <location>
        <begin position="122"/>
        <end position="126"/>
    </location>
    <ligand>
        <name>ATP</name>
        <dbReference type="ChEBI" id="CHEBI:30616"/>
    </ligand>
</feature>
<feature type="binding site" evidence="4">
    <location>
        <position position="185"/>
    </location>
    <ligand>
        <name>ATP</name>
        <dbReference type="ChEBI" id="CHEBI:30616"/>
    </ligand>
</feature>
<feature type="binding site" evidence="2">
    <location>
        <position position="225"/>
    </location>
    <ligand>
        <name>L-arginine</name>
        <dbReference type="ChEBI" id="CHEBI:32682"/>
    </ligand>
</feature>
<feature type="binding site" evidence="4">
    <location>
        <position position="229"/>
    </location>
    <ligand>
        <name>ATP</name>
        <dbReference type="ChEBI" id="CHEBI:30616"/>
    </ligand>
</feature>
<feature type="binding site" evidence="2">
    <location>
        <position position="271"/>
    </location>
    <ligand>
        <name>L-arginine</name>
        <dbReference type="ChEBI" id="CHEBI:32682"/>
    </ligand>
</feature>
<feature type="binding site" evidence="4">
    <location>
        <begin position="280"/>
        <end position="284"/>
    </location>
    <ligand>
        <name>ATP</name>
        <dbReference type="ChEBI" id="CHEBI:30616"/>
    </ligand>
</feature>
<feature type="binding site" evidence="4">
    <location>
        <begin position="309"/>
        <end position="314"/>
    </location>
    <ligand>
        <name>ATP</name>
        <dbReference type="ChEBI" id="CHEBI:30616"/>
    </ligand>
</feature>
<feature type="binding site" evidence="2">
    <location>
        <position position="314"/>
    </location>
    <ligand>
        <name>L-arginine</name>
        <dbReference type="ChEBI" id="CHEBI:32682"/>
    </ligand>
</feature>
<feature type="modified residue" description="N-acetylalanine" evidence="1">
    <location>
        <position position="2"/>
    </location>
</feature>
<protein>
    <recommendedName>
        <fullName>Arginine kinase</fullName>
        <shortName>AK</shortName>
        <ecNumber>2.7.3.3</ecNumber>
    </recommendedName>
</protein>
<organism>
    <name type="scientific">Carcinus maenas</name>
    <name type="common">Common shore crab</name>
    <name type="synonym">Green crab</name>
    <dbReference type="NCBI Taxonomy" id="6759"/>
    <lineage>
        <taxon>Eukaryota</taxon>
        <taxon>Metazoa</taxon>
        <taxon>Ecdysozoa</taxon>
        <taxon>Arthropoda</taxon>
        <taxon>Crustacea</taxon>
        <taxon>Multicrustacea</taxon>
        <taxon>Malacostraca</taxon>
        <taxon>Eumalacostraca</taxon>
        <taxon>Eucarida</taxon>
        <taxon>Decapoda</taxon>
        <taxon>Pleocyemata</taxon>
        <taxon>Brachyura</taxon>
        <taxon>Eubrachyura</taxon>
        <taxon>Portunoidea</taxon>
        <taxon>Carcinidae</taxon>
        <taxon>Carcinus</taxon>
    </lineage>
</organism>
<dbReference type="EC" id="2.7.3.3"/>
<dbReference type="EMBL" id="AF167313">
    <property type="protein sequence ID" value="AAD48470.1"/>
    <property type="molecule type" value="mRNA"/>
</dbReference>
<dbReference type="SMR" id="Q9U9J4"/>
<dbReference type="BRENDA" id="2.7.3.3">
    <property type="organism ID" value="1184"/>
</dbReference>
<dbReference type="GO" id="GO:0005615">
    <property type="term" value="C:extracellular space"/>
    <property type="evidence" value="ECO:0007669"/>
    <property type="project" value="TreeGrafter"/>
</dbReference>
<dbReference type="GO" id="GO:0004054">
    <property type="term" value="F:arginine kinase activity"/>
    <property type="evidence" value="ECO:0000250"/>
    <property type="project" value="UniProtKB"/>
</dbReference>
<dbReference type="GO" id="GO:0005524">
    <property type="term" value="F:ATP binding"/>
    <property type="evidence" value="ECO:0007669"/>
    <property type="project" value="UniProtKB-KW"/>
</dbReference>
<dbReference type="GO" id="GO:0004111">
    <property type="term" value="F:creatine kinase activity"/>
    <property type="evidence" value="ECO:0007669"/>
    <property type="project" value="InterPro"/>
</dbReference>
<dbReference type="GO" id="GO:0046314">
    <property type="term" value="P:phosphocreatine biosynthetic process"/>
    <property type="evidence" value="ECO:0007669"/>
    <property type="project" value="InterPro"/>
</dbReference>
<dbReference type="CDD" id="cd07932">
    <property type="entry name" value="arginine_kinase_like"/>
    <property type="match status" value="1"/>
</dbReference>
<dbReference type="FunFam" id="3.30.590.10:FF:000006">
    <property type="entry name" value="Arginine kinase 1"/>
    <property type="match status" value="1"/>
</dbReference>
<dbReference type="FunFam" id="1.10.135.10:FF:000003">
    <property type="entry name" value="Three-domain arginine kinase"/>
    <property type="match status" value="1"/>
</dbReference>
<dbReference type="Gene3D" id="1.10.135.10">
    <property type="entry name" value="ATP:guanido phosphotransferase, N-terminal domain"/>
    <property type="match status" value="1"/>
</dbReference>
<dbReference type="Gene3D" id="3.30.590.10">
    <property type="entry name" value="Glutamine synthetase/guanido kinase, catalytic domain"/>
    <property type="match status" value="1"/>
</dbReference>
<dbReference type="InterPro" id="IPR000749">
    <property type="entry name" value="ATP-guanido_PTrfase"/>
</dbReference>
<dbReference type="InterPro" id="IPR022415">
    <property type="entry name" value="ATP-guanido_PTrfase_AS"/>
</dbReference>
<dbReference type="InterPro" id="IPR022414">
    <property type="entry name" value="ATP-guanido_PTrfase_cat"/>
</dbReference>
<dbReference type="InterPro" id="IPR022413">
    <property type="entry name" value="ATP-guanido_PTrfase_N"/>
</dbReference>
<dbReference type="InterPro" id="IPR036802">
    <property type="entry name" value="ATP-guanido_PTrfase_N_sf"/>
</dbReference>
<dbReference type="InterPro" id="IPR014746">
    <property type="entry name" value="Gln_synth/guanido_kin_cat_dom"/>
</dbReference>
<dbReference type="PANTHER" id="PTHR11547:SF38">
    <property type="entry name" value="ARGININE KINASE 1-RELATED"/>
    <property type="match status" value="1"/>
</dbReference>
<dbReference type="PANTHER" id="PTHR11547">
    <property type="entry name" value="ARGININE OR CREATINE KINASE"/>
    <property type="match status" value="1"/>
</dbReference>
<dbReference type="Pfam" id="PF00217">
    <property type="entry name" value="ATP-gua_Ptrans"/>
    <property type="match status" value="1"/>
</dbReference>
<dbReference type="Pfam" id="PF02807">
    <property type="entry name" value="ATP-gua_PtransN"/>
    <property type="match status" value="1"/>
</dbReference>
<dbReference type="SUPFAM" id="SSF55931">
    <property type="entry name" value="Glutamine synthetase/guanido kinase"/>
    <property type="match status" value="1"/>
</dbReference>
<dbReference type="SUPFAM" id="SSF48034">
    <property type="entry name" value="Guanido kinase N-terminal domain"/>
    <property type="match status" value="1"/>
</dbReference>
<dbReference type="PROSITE" id="PS00112">
    <property type="entry name" value="PHOSPHAGEN_KINASE"/>
    <property type="match status" value="1"/>
</dbReference>
<dbReference type="PROSITE" id="PS51510">
    <property type="entry name" value="PHOSPHAGEN_KINASE_C"/>
    <property type="match status" value="1"/>
</dbReference>
<dbReference type="PROSITE" id="PS51509">
    <property type="entry name" value="PHOSPHAGEN_KINASE_N"/>
    <property type="match status" value="1"/>
</dbReference>
<accession>Q9U9J4</accession>
<reference key="1">
    <citation type="submission" date="1999-07" db="EMBL/GenBank/DDBJ databases">
        <title>Arginine kinase mRNA sequence from the gill of the green shore crab Carcinus maenas.</title>
        <authorList>
            <person name="Paulsen R.S."/>
            <person name="Kotlyar S."/>
            <person name="Weihrauch D."/>
            <person name="Towle D.W."/>
        </authorList>
    </citation>
    <scope>NUCLEOTIDE SEQUENCE [MRNA]</scope>
    <source>
        <tissue>Gill</tissue>
    </source>
</reference>
<proteinExistence type="evidence at transcript level"/>
<comment type="catalytic activity">
    <reaction>
        <text>L-arginine + ATP = N(omega)-phospho-L-arginine + ADP + H(+)</text>
        <dbReference type="Rhea" id="RHEA:22940"/>
        <dbReference type="ChEBI" id="CHEBI:15378"/>
        <dbReference type="ChEBI" id="CHEBI:30616"/>
        <dbReference type="ChEBI" id="CHEBI:32682"/>
        <dbReference type="ChEBI" id="CHEBI:58477"/>
        <dbReference type="ChEBI" id="CHEBI:456216"/>
        <dbReference type="EC" id="2.7.3.3"/>
    </reaction>
</comment>
<comment type="similarity">
    <text evidence="3 4">Belongs to the ATP:guanido phosphotransferase family.</text>
</comment>
<sequence length="357" mass="40237">MADAATITKLEEGFKKLEAATDCKSLLKKYLTKSVFDQLKAKKTSLGATLLDVIQSGVENLDSGVGVYAPDAEAYTLFSPLFDPIIEDYHKGFKQTDKHPNKDFGDVNQFVNVDPDGKFVISTRVRCGRSMEGYPFNPCLTEAQYKEMESKVSSTLSNLEGELKGTYHALTGMTKDVQQKLIDDHFLFKEGDRFLQAANACRYWPTGRGIYHNDNKTFLVWCNEEDHLRIISMQMGGDLGQVYRRLVTAVNDIEKRVPFSHHDRLGFLTFCPTNLGTTVRASVHIKLPKLAANRDKLEEVAGKYSLQVRGTRGEHTEAEGGVYDISNKRRMGLTEFQAVKEMQDGILELIKIEKEMQ</sequence>
<evidence type="ECO:0000250" key="1"/>
<evidence type="ECO:0000250" key="2">
    <source>
        <dbReference type="UniProtKB" id="Q004B5"/>
    </source>
</evidence>
<evidence type="ECO:0000255" key="3">
    <source>
        <dbReference type="PROSITE-ProRule" id="PRU00842"/>
    </source>
</evidence>
<evidence type="ECO:0000255" key="4">
    <source>
        <dbReference type="PROSITE-ProRule" id="PRU00843"/>
    </source>
</evidence>
<name>KARG_CARMA</name>
<keyword id="KW-0007">Acetylation</keyword>
<keyword id="KW-0067">ATP-binding</keyword>
<keyword id="KW-0418">Kinase</keyword>
<keyword id="KW-0547">Nucleotide-binding</keyword>
<keyword id="KW-0808">Transferase</keyword>